<proteinExistence type="inferred from homology"/>
<name>GPSB_LISW6</name>
<gene>
    <name evidence="1" type="primary">gpsB</name>
    <name type="ordered locus">lwe1907</name>
</gene>
<dbReference type="EMBL" id="AM263198">
    <property type="protein sequence ID" value="CAK21325.1"/>
    <property type="molecule type" value="Genomic_DNA"/>
</dbReference>
<dbReference type="RefSeq" id="WP_011702673.1">
    <property type="nucleotide sequence ID" value="NC_008555.1"/>
</dbReference>
<dbReference type="SMR" id="A0AJZ3"/>
<dbReference type="STRING" id="386043.lwe1907"/>
<dbReference type="GeneID" id="61189809"/>
<dbReference type="KEGG" id="lwe:lwe1907"/>
<dbReference type="eggNOG" id="COG3599">
    <property type="taxonomic scope" value="Bacteria"/>
</dbReference>
<dbReference type="HOGENOM" id="CLU_140309_1_0_9"/>
<dbReference type="OrthoDB" id="389699at2"/>
<dbReference type="Proteomes" id="UP000000779">
    <property type="component" value="Chromosome"/>
</dbReference>
<dbReference type="GO" id="GO:0005737">
    <property type="term" value="C:cytoplasm"/>
    <property type="evidence" value="ECO:0007669"/>
    <property type="project" value="UniProtKB-SubCell"/>
</dbReference>
<dbReference type="GO" id="GO:0051301">
    <property type="term" value="P:cell division"/>
    <property type="evidence" value="ECO:0007669"/>
    <property type="project" value="UniProtKB-UniRule"/>
</dbReference>
<dbReference type="GO" id="GO:0008360">
    <property type="term" value="P:regulation of cell shape"/>
    <property type="evidence" value="ECO:0007669"/>
    <property type="project" value="UniProtKB-UniRule"/>
</dbReference>
<dbReference type="Gene3D" id="6.10.250.660">
    <property type="match status" value="1"/>
</dbReference>
<dbReference type="HAMAP" id="MF_02011">
    <property type="entry name" value="GpsB"/>
    <property type="match status" value="1"/>
</dbReference>
<dbReference type="InterPro" id="IPR011229">
    <property type="entry name" value="Cell_cycle_GpsB"/>
</dbReference>
<dbReference type="InterPro" id="IPR019933">
    <property type="entry name" value="DivIVA_domain"/>
</dbReference>
<dbReference type="InterPro" id="IPR007793">
    <property type="entry name" value="DivIVA_fam"/>
</dbReference>
<dbReference type="NCBIfam" id="TIGR03544">
    <property type="entry name" value="DivI1A_domain"/>
    <property type="match status" value="1"/>
</dbReference>
<dbReference type="NCBIfam" id="NF010725">
    <property type="entry name" value="PRK14127.1"/>
    <property type="match status" value="1"/>
</dbReference>
<dbReference type="PANTHER" id="PTHR35794:SF1">
    <property type="entry name" value="CELL CYCLE PROTEIN GPSB"/>
    <property type="match status" value="1"/>
</dbReference>
<dbReference type="PANTHER" id="PTHR35794">
    <property type="entry name" value="CELL DIVISION PROTEIN DIVIVA"/>
    <property type="match status" value="1"/>
</dbReference>
<dbReference type="Pfam" id="PF05103">
    <property type="entry name" value="DivIVA"/>
    <property type="match status" value="1"/>
</dbReference>
<dbReference type="PIRSF" id="PIRSF029938">
    <property type="entry name" value="UCP029938"/>
    <property type="match status" value="1"/>
</dbReference>
<evidence type="ECO:0000255" key="1">
    <source>
        <dbReference type="HAMAP-Rule" id="MF_02011"/>
    </source>
</evidence>
<sequence>MTSEQFEYHLTGKEILEKEFKTGLRGYNPEDVDEFLDMVIKDYSTFTQEIEALQAENIRLVQELDNAPVRTAPQPAPTFQAAAQPAGTTNFDILKRLSNLEKHVFGNKLDDND</sequence>
<keyword id="KW-0131">Cell cycle</keyword>
<keyword id="KW-0132">Cell division</keyword>
<keyword id="KW-0133">Cell shape</keyword>
<keyword id="KW-0175">Coiled coil</keyword>
<keyword id="KW-0963">Cytoplasm</keyword>
<protein>
    <recommendedName>
        <fullName evidence="1">Cell cycle protein GpsB</fullName>
    </recommendedName>
    <alternativeName>
        <fullName evidence="1">Guiding PBP1-shuttling protein</fullName>
    </alternativeName>
</protein>
<reference key="1">
    <citation type="journal article" date="2006" name="J. Bacteriol.">
        <title>Whole-genome sequence of Listeria welshimeri reveals common steps in genome reduction with Listeria innocua as compared to Listeria monocytogenes.</title>
        <authorList>
            <person name="Hain T."/>
            <person name="Steinweg C."/>
            <person name="Kuenne C.T."/>
            <person name="Billion A."/>
            <person name="Ghai R."/>
            <person name="Chatterjee S.S."/>
            <person name="Domann E."/>
            <person name="Kaerst U."/>
            <person name="Goesmann A."/>
            <person name="Bekel T."/>
            <person name="Bartels D."/>
            <person name="Kaiser O."/>
            <person name="Meyer F."/>
            <person name="Puehler A."/>
            <person name="Weisshaar B."/>
            <person name="Wehland J."/>
            <person name="Liang C."/>
            <person name="Dandekar T."/>
            <person name="Lampidis R."/>
            <person name="Kreft J."/>
            <person name="Goebel W."/>
            <person name="Chakraborty T."/>
        </authorList>
    </citation>
    <scope>NUCLEOTIDE SEQUENCE [LARGE SCALE GENOMIC DNA]</scope>
    <source>
        <strain>ATCC 35897 / DSM 20650 / CCUG 15529 / CIP 8149 / NCTC 11857 / SLCC 5334 / V8</strain>
    </source>
</reference>
<comment type="function">
    <text evidence="1">Divisome component that associates with the complex late in its assembly, after the Z-ring is formed, and is dependent on DivIC and PBP2B for its recruitment to the divisome. Together with EzrA, is a key component of the system that regulates PBP1 localization during cell cycle progression. Its main role could be the removal of PBP1 from the cell pole after pole maturation is completed. Also contributes to the recruitment of PBP1 to the division complex. Not essential for septum formation.</text>
</comment>
<comment type="subunit">
    <text evidence="1">Forms polymers through the coiled coil domains. Interacts with PBP1, MreC and EzrA.</text>
</comment>
<comment type="subcellular location">
    <subcellularLocation>
        <location evidence="1">Cytoplasm</location>
    </subcellularLocation>
    <text evidence="1">Shuttles between the lateral wall and the division site in a cell cycle-dependent manner.</text>
</comment>
<comment type="similarity">
    <text evidence="1">Belongs to the GpsB family.</text>
</comment>
<accession>A0AJZ3</accession>
<feature type="chain" id="PRO_0000337928" description="Cell cycle protein GpsB">
    <location>
        <begin position="1"/>
        <end position="113"/>
    </location>
</feature>
<feature type="coiled-coil region" evidence="1">
    <location>
        <begin position="36"/>
        <end position="68"/>
    </location>
</feature>
<organism>
    <name type="scientific">Listeria welshimeri serovar 6b (strain ATCC 35897 / DSM 20650 / CCUG 15529 / CIP 8149 / NCTC 11857 / SLCC 5334 / V8)</name>
    <dbReference type="NCBI Taxonomy" id="386043"/>
    <lineage>
        <taxon>Bacteria</taxon>
        <taxon>Bacillati</taxon>
        <taxon>Bacillota</taxon>
        <taxon>Bacilli</taxon>
        <taxon>Bacillales</taxon>
        <taxon>Listeriaceae</taxon>
        <taxon>Listeria</taxon>
    </lineage>
</organism>